<sequence>MEVGKKLELSITADEVEVLSKAIKNEKFQEMLSNYFQEISSPENVKTYQEEVTLLEQKRGNSIEFIHPSPFRALETSVDGKQRCFINICACDKVGKPESKTVRTVQRFGEKWSLPHLLQPGRQNCERKGNISTIYDVCFHPETLHLADKSEKFMDMVKEVAIQGIQKAFKVLLDKSNLKEMDIKYKGVPQSCVIRKPIPGYEAKEPPEERDLSPSTSHLPENSIDVPSKLLQKQPEEPIKPIYAIKYRSVIDLQDFRVSRESARSLRPKEIVITIDLPLLPTVHGMVLEVEEKRLLLESENPSYRLELHLSYPVDENNGKAKFNKHQRQLTVTLPVQPPLEAPQLPGGSPNPTSDPQNENQTRVEERVEEMAEKGGEQHQRGNDNGAAQGRRQVLEDQNGEKEGKKIQKRNERPEHEVKNETLRKKHDEKFELQDVQQENKGNCSNTKEVKCCRRTKDSLDSLIPTTAASPDGQKKHILTQETEKPKGSVEIPTSSQEYLKVPVTSAATAANVNASDETSKRKPTEEQLEDADEDVLPAEQRFQEPEEINVPAAGTLRQNNAAGNEKINDPHTSAGFVLQNKLMYELD</sequence>
<proteinExistence type="evidence at transcript level"/>
<evidence type="ECO:0000250" key="1">
    <source>
        <dbReference type="UniProtKB" id="B1H1W9"/>
    </source>
</evidence>
<evidence type="ECO:0000255" key="2">
    <source>
        <dbReference type="HAMAP-Rule" id="MF_03069"/>
    </source>
</evidence>
<evidence type="ECO:0000256" key="3">
    <source>
        <dbReference type="SAM" id="MobiDB-lite"/>
    </source>
</evidence>
<evidence type="ECO:0000269" key="4">
    <source>
    </source>
</evidence>
<dbReference type="EMBL" id="AB455535">
    <property type="protein sequence ID" value="BAG75150.1"/>
    <property type="molecule type" value="mRNA"/>
</dbReference>
<dbReference type="RefSeq" id="NP_001131059.1">
    <property type="nucleotide sequence ID" value="NM_001137587.1"/>
</dbReference>
<dbReference type="SMR" id="B6F1W5"/>
<dbReference type="STRING" id="8090.ENSORLP00000026727"/>
<dbReference type="GeneID" id="100192402"/>
<dbReference type="KEGG" id="ola:100192402"/>
<dbReference type="CTD" id="55172"/>
<dbReference type="InParanoid" id="B6F1W5"/>
<dbReference type="OrthoDB" id="546764at2759"/>
<dbReference type="Proteomes" id="UP000001038">
    <property type="component" value="Unplaced"/>
</dbReference>
<dbReference type="Proteomes" id="UP000265180">
    <property type="component" value="Chromosome 9"/>
</dbReference>
<dbReference type="Proteomes" id="UP000265200">
    <property type="component" value="Chromosome 9"/>
</dbReference>
<dbReference type="GO" id="GO:0005737">
    <property type="term" value="C:cytoplasm"/>
    <property type="evidence" value="ECO:0000314"/>
    <property type="project" value="UniProtKB"/>
</dbReference>
<dbReference type="GO" id="GO:0120293">
    <property type="term" value="C:dynein axonemal particle"/>
    <property type="evidence" value="ECO:0000250"/>
    <property type="project" value="UniProtKB"/>
</dbReference>
<dbReference type="GO" id="GO:0005576">
    <property type="term" value="C:extracellular region"/>
    <property type="evidence" value="ECO:0007669"/>
    <property type="project" value="GOC"/>
</dbReference>
<dbReference type="GO" id="GO:0070286">
    <property type="term" value="P:axonemal dynein complex assembly"/>
    <property type="evidence" value="ECO:0000315"/>
    <property type="project" value="UniProtKB"/>
</dbReference>
<dbReference type="GO" id="GO:0060285">
    <property type="term" value="P:cilium-dependent cell motility"/>
    <property type="evidence" value="ECO:0000315"/>
    <property type="project" value="UniProtKB"/>
</dbReference>
<dbReference type="GO" id="GO:0003351">
    <property type="term" value="P:epithelial cilium movement involved in extracellular fluid movement"/>
    <property type="evidence" value="ECO:0000318"/>
    <property type="project" value="GO_Central"/>
</dbReference>
<dbReference type="CDD" id="cd00298">
    <property type="entry name" value="ACD_sHsps_p23-like"/>
    <property type="match status" value="1"/>
</dbReference>
<dbReference type="HAMAP" id="MF_03069">
    <property type="entry name" value="Kintoun"/>
    <property type="match status" value="1"/>
</dbReference>
<dbReference type="InterPro" id="IPR034727">
    <property type="entry name" value="Kintoun"/>
</dbReference>
<dbReference type="InterPro" id="IPR050734">
    <property type="entry name" value="PIH1/Kintoun_subfamily"/>
</dbReference>
<dbReference type="InterPro" id="IPR012981">
    <property type="entry name" value="PIH1_N"/>
</dbReference>
<dbReference type="InterPro" id="IPR041442">
    <property type="entry name" value="PIH1D1/2/3_CS-like"/>
</dbReference>
<dbReference type="PANTHER" id="PTHR22997">
    <property type="entry name" value="PIH1 DOMAIN-CONTAINING PROTEIN 1"/>
    <property type="match status" value="1"/>
</dbReference>
<dbReference type="PANTHER" id="PTHR22997:SF3">
    <property type="entry name" value="PROTEIN KINTOUN"/>
    <property type="match status" value="1"/>
</dbReference>
<dbReference type="Pfam" id="PF08190">
    <property type="entry name" value="PIH1"/>
    <property type="match status" value="1"/>
</dbReference>
<dbReference type="Pfam" id="PF18201">
    <property type="entry name" value="PIH1_CS"/>
    <property type="match status" value="1"/>
</dbReference>
<organism>
    <name type="scientific">Oryzias latipes</name>
    <name type="common">Japanese rice fish</name>
    <name type="synonym">Japanese killifish</name>
    <dbReference type="NCBI Taxonomy" id="8090"/>
    <lineage>
        <taxon>Eukaryota</taxon>
        <taxon>Metazoa</taxon>
        <taxon>Chordata</taxon>
        <taxon>Craniata</taxon>
        <taxon>Vertebrata</taxon>
        <taxon>Euteleostomi</taxon>
        <taxon>Actinopterygii</taxon>
        <taxon>Neopterygii</taxon>
        <taxon>Teleostei</taxon>
        <taxon>Neoteleostei</taxon>
        <taxon>Acanthomorphata</taxon>
        <taxon>Ovalentaria</taxon>
        <taxon>Atherinomorphae</taxon>
        <taxon>Beloniformes</taxon>
        <taxon>Adrianichthyidae</taxon>
        <taxon>Oryziinae</taxon>
        <taxon>Oryzias</taxon>
    </lineage>
</organism>
<reference key="1">
    <citation type="journal article" date="2008" name="Nature">
        <title>Ktu/PF13 is required for cytoplasmic pre-assembly of axonemal dyneins.</title>
        <authorList>
            <person name="Omran H."/>
            <person name="Kobayashi D."/>
            <person name="Olbrich H."/>
            <person name="Tsukahara T."/>
            <person name="Loges N.T."/>
            <person name="Hagiwara H."/>
            <person name="Zhang Q."/>
            <person name="Leblond G."/>
            <person name="O'Toole E."/>
            <person name="Hara C."/>
            <person name="Mizuno H."/>
            <person name="Kawano H."/>
            <person name="Fliegauf M."/>
            <person name="Yagi T."/>
            <person name="Koshida S."/>
            <person name="Miyawaki A."/>
            <person name="Zentgraf H."/>
            <person name="Seithe H."/>
            <person name="Reinhardt R."/>
            <person name="Watanabe Y."/>
            <person name="Kamiya R."/>
            <person name="Mitchell D.R."/>
            <person name="Takeda H."/>
        </authorList>
    </citation>
    <scope>NUCLEOTIDE SEQUENCE [MRNA]</scope>
    <scope>FUNCTION</scope>
    <scope>DISRUPTION PHENOTYPE</scope>
</reference>
<name>KTU_ORYLA</name>
<protein>
    <recommendedName>
        <fullName evidence="2">Protein kintoun</fullName>
    </recommendedName>
    <alternativeName>
        <fullName evidence="2">Dynein assembly factor 2, axonemal</fullName>
    </alternativeName>
</protein>
<comment type="function">
    <text evidence="2 4">Required for cytoplasmic pre-assembly of axonemal dyneins, thereby playing a central role in motility in cilia and flagella. Involved in pre-assembly of dynein arm complexes in the cytoplasm before intraflagellar transport loads them for the ciliary compartment.</text>
</comment>
<comment type="subcellular location">
    <subcellularLocation>
        <location evidence="2">Cytoplasm</location>
    </subcellularLocation>
    <subcellularLocation>
        <location evidence="1">Dynein axonemal particle</location>
    </subcellularLocation>
    <text evidence="2">Localizes in the apical cytoplasm around the gamma-tubulin-positive pericentriolar region, not in the cilia.</text>
</comment>
<comment type="disruption phenotype">
    <text evidence="4">Organ laterality defects due to altered ciliary motility. Typical randomized left-right mutant leading to situs inversus. Fishes lack directional liquid flow in Kupffer's vesicle (an organ functionally equivalent to the mouse node in terms of left-right specification). Although the number and length of cilia in Kupffer's vesicle seem normal, their motility is completely lost. Homozygous fish are viable but develop primary ciliary dyskinesia. Furthermore, male mutant fish have impaired sperm motility leading to reduced fertility. Ultrastructurally, affected cilia and flagella show partial or complete loss of outer and inner dynein arms. This loss of dynein arms is more severe in Kupffer's vesicle cilia than in sperm flagella.</text>
</comment>
<comment type="similarity">
    <text evidence="2">Belongs to the PIH1 family. Kintoun subfamily.</text>
</comment>
<keyword id="KW-0963">Cytoplasm</keyword>
<keyword id="KW-1185">Reference proteome</keyword>
<feature type="chain" id="PRO_0000365799" description="Protein kintoun">
    <location>
        <begin position="1"/>
        <end position="588"/>
    </location>
</feature>
<feature type="region of interest" description="Disordered" evidence="3">
    <location>
        <begin position="199"/>
        <end position="223"/>
    </location>
</feature>
<feature type="region of interest" description="Disordered" evidence="3">
    <location>
        <begin position="338"/>
        <end position="498"/>
    </location>
</feature>
<feature type="region of interest" description="Disordered" evidence="3">
    <location>
        <begin position="510"/>
        <end position="535"/>
    </location>
</feature>
<feature type="compositionally biased region" description="Basic and acidic residues" evidence="3">
    <location>
        <begin position="202"/>
        <end position="212"/>
    </location>
</feature>
<feature type="compositionally biased region" description="Polar residues" evidence="3">
    <location>
        <begin position="350"/>
        <end position="361"/>
    </location>
</feature>
<feature type="compositionally biased region" description="Basic and acidic residues" evidence="3">
    <location>
        <begin position="362"/>
        <end position="382"/>
    </location>
</feature>
<feature type="compositionally biased region" description="Basic and acidic residues" evidence="3">
    <location>
        <begin position="393"/>
        <end position="433"/>
    </location>
</feature>
<feature type="compositionally biased region" description="Polar residues" evidence="3">
    <location>
        <begin position="435"/>
        <end position="447"/>
    </location>
</feature>
<feature type="compositionally biased region" description="Basic and acidic residues" evidence="3">
    <location>
        <begin position="448"/>
        <end position="460"/>
    </location>
</feature>
<accession>B6F1W5</accession>
<gene>
    <name evidence="2" type="primary">dnaaf2</name>
    <name evidence="2" type="synonym">ktu</name>
</gene>